<keyword id="KW-1003">Cell membrane</keyword>
<keyword id="KW-0325">Glycoprotein</keyword>
<keyword id="KW-0472">Membrane</keyword>
<keyword id="KW-0517">Myogenesis</keyword>
<keyword id="KW-1185">Reference proteome</keyword>
<keyword id="KW-0732">Signal</keyword>
<keyword id="KW-0812">Transmembrane</keyword>
<keyword id="KW-1133">Transmembrane helix</keyword>
<proteinExistence type="evidence at transcript level"/>
<accession>Q0V9E0</accession>
<dbReference type="EMBL" id="BC121614">
    <property type="protein sequence ID" value="AAI21615.1"/>
    <property type="molecule type" value="mRNA"/>
</dbReference>
<dbReference type="RefSeq" id="NP_001072403.1">
    <property type="nucleotide sequence ID" value="NM_001078935.1"/>
</dbReference>
<dbReference type="FunCoup" id="Q0V9E0">
    <property type="interactions" value="39"/>
</dbReference>
<dbReference type="STRING" id="8364.ENSXETP00000015493"/>
<dbReference type="GlyCosmos" id="Q0V9E0">
    <property type="glycosylation" value="3 sites, No reported glycans"/>
</dbReference>
<dbReference type="PaxDb" id="8364-ENSXETP00000059547"/>
<dbReference type="DNASU" id="779857"/>
<dbReference type="GeneID" id="779857"/>
<dbReference type="KEGG" id="xtr:779857"/>
<dbReference type="AGR" id="Xenbase:XB-GENE-5872789"/>
<dbReference type="CTD" id="130827"/>
<dbReference type="Xenbase" id="XB-GENE-5872789">
    <property type="gene designation" value="tmem182"/>
</dbReference>
<dbReference type="eggNOG" id="ENOG502QVS4">
    <property type="taxonomic scope" value="Eukaryota"/>
</dbReference>
<dbReference type="HOGENOM" id="CLU_105472_0_0_1"/>
<dbReference type="InParanoid" id="Q0V9E0"/>
<dbReference type="OMA" id="RYGWSFI"/>
<dbReference type="OrthoDB" id="9942154at2759"/>
<dbReference type="Proteomes" id="UP000008143">
    <property type="component" value="Chromosome 2"/>
</dbReference>
<dbReference type="GO" id="GO:0005886">
    <property type="term" value="C:plasma membrane"/>
    <property type="evidence" value="ECO:0007669"/>
    <property type="project" value="UniProtKB-SubCell"/>
</dbReference>
<dbReference type="GO" id="GO:0007517">
    <property type="term" value="P:muscle organ development"/>
    <property type="evidence" value="ECO:0007669"/>
    <property type="project" value="UniProtKB-KW"/>
</dbReference>
<dbReference type="GO" id="GO:0014906">
    <property type="term" value="P:myotube cell development involved in skeletal muscle regeneration"/>
    <property type="evidence" value="ECO:0000250"/>
    <property type="project" value="UniProtKB"/>
</dbReference>
<dbReference type="GO" id="GO:0014908">
    <property type="term" value="P:myotube differentiation involved in skeletal muscle regeneration"/>
    <property type="evidence" value="ECO:0000250"/>
    <property type="project" value="UniProtKB"/>
</dbReference>
<dbReference type="GO" id="GO:0045662">
    <property type="term" value="P:negative regulation of myoblast differentiation"/>
    <property type="evidence" value="ECO:0000250"/>
    <property type="project" value="UniProtKB"/>
</dbReference>
<dbReference type="GO" id="GO:1901740">
    <property type="term" value="P:negative regulation of myoblast fusion"/>
    <property type="evidence" value="ECO:0000250"/>
    <property type="project" value="UniProtKB"/>
</dbReference>
<dbReference type="Gene3D" id="1.20.140.150">
    <property type="match status" value="1"/>
</dbReference>
<dbReference type="InterPro" id="IPR004031">
    <property type="entry name" value="PMP22/EMP/MP20/Claudin"/>
</dbReference>
<dbReference type="InterPro" id="IPR026763">
    <property type="entry name" value="TMEM182"/>
</dbReference>
<dbReference type="PANTHER" id="PTHR32012:SF0">
    <property type="entry name" value="TRANSMEMBRANE PROTEIN 182"/>
    <property type="match status" value="1"/>
</dbReference>
<dbReference type="PANTHER" id="PTHR32012">
    <property type="entry name" value="TRANSMEMBRANE PROTEIN 182-RELATED"/>
    <property type="match status" value="1"/>
</dbReference>
<dbReference type="Pfam" id="PF13903">
    <property type="entry name" value="Claudin_2"/>
    <property type="match status" value="1"/>
</dbReference>
<feature type="signal peptide" evidence="2">
    <location>
        <begin position="1"/>
        <end position="33"/>
    </location>
</feature>
<feature type="chain" id="PRO_0000369258" description="Transmembrane protein 182">
    <location>
        <begin position="34"/>
        <end position="235"/>
    </location>
</feature>
<feature type="topological domain" description="Extracellular" evidence="2">
    <location>
        <begin position="34"/>
        <end position="122"/>
    </location>
</feature>
<feature type="transmembrane region" description="Helical" evidence="2">
    <location>
        <begin position="123"/>
        <end position="143"/>
    </location>
</feature>
<feature type="topological domain" description="Cytoplasmic" evidence="2">
    <location>
        <begin position="144"/>
        <end position="155"/>
    </location>
</feature>
<feature type="transmembrane region" description="Helical" evidence="2">
    <location>
        <begin position="156"/>
        <end position="176"/>
    </location>
</feature>
<feature type="topological domain" description="Extracellular" evidence="2">
    <location>
        <begin position="177"/>
        <end position="205"/>
    </location>
</feature>
<feature type="transmembrane region" description="Helical" evidence="2">
    <location>
        <begin position="206"/>
        <end position="226"/>
    </location>
</feature>
<feature type="topological domain" description="Cytoplasmic" evidence="2">
    <location>
        <begin position="227"/>
        <end position="235"/>
    </location>
</feature>
<feature type="glycosylation site" description="N-linked (GlcNAc...) asparagine" evidence="2">
    <location>
        <position position="48"/>
    </location>
</feature>
<feature type="glycosylation site" description="N-linked (GlcNAc...) asparagine" evidence="2">
    <location>
        <position position="90"/>
    </location>
</feature>
<feature type="glycosylation site" description="N-linked (GlcNAc...) asparagine" evidence="2">
    <location>
        <position position="107"/>
    </location>
</feature>
<sequence length="235" mass="26565">MKLSIGIFFGGLFGALGILIYLVAFGSDYWLLAKEIEKCSENQETGDNATHSVLLHHEGFFWRCWFNHAEEENSNTMENFWFTNQAPTKNCTHAYLSPFPQNRDNSNSTSYHSALVYRGFWNIFMLLGVVTAVIGGFLIICAAPFTNHRIYKAGGGLFITSGILFALVVVMHVFWVQSVSDIKGYTDTRQQDCSQFTVYVSFGWSFMLAPFGIFFCLFAGMLFLLVGHTIHVHTK</sequence>
<name>TM182_XENTR</name>
<comment type="function">
    <text evidence="1">May negatively regulate myogenesis and skeletal muscle regeneration.</text>
</comment>
<comment type="subcellular location">
    <subcellularLocation>
        <location evidence="1">Cell membrane</location>
        <topology evidence="2">Multi-pass membrane protein</topology>
    </subcellularLocation>
</comment>
<comment type="similarity">
    <text evidence="3">Belongs to the TMEM182 family.</text>
</comment>
<reference key="1">
    <citation type="submission" date="2006-08" db="EMBL/GenBank/DDBJ databases">
        <authorList>
            <consortium name="NIH - Xenopus Gene Collection (XGC) project"/>
        </authorList>
    </citation>
    <scope>NUCLEOTIDE SEQUENCE [LARGE SCALE MRNA]</scope>
    <source>
        <strain>N6</strain>
        <tissue>Skeletal muscle</tissue>
    </source>
</reference>
<protein>
    <recommendedName>
        <fullName>Transmembrane protein 182</fullName>
    </recommendedName>
</protein>
<evidence type="ECO:0000250" key="1">
    <source>
        <dbReference type="UniProtKB" id="A0A1D5NY17"/>
    </source>
</evidence>
<evidence type="ECO:0000255" key="2"/>
<evidence type="ECO:0000305" key="3"/>
<gene>
    <name type="primary">tmem182</name>
</gene>
<organism>
    <name type="scientific">Xenopus tropicalis</name>
    <name type="common">Western clawed frog</name>
    <name type="synonym">Silurana tropicalis</name>
    <dbReference type="NCBI Taxonomy" id="8364"/>
    <lineage>
        <taxon>Eukaryota</taxon>
        <taxon>Metazoa</taxon>
        <taxon>Chordata</taxon>
        <taxon>Craniata</taxon>
        <taxon>Vertebrata</taxon>
        <taxon>Euteleostomi</taxon>
        <taxon>Amphibia</taxon>
        <taxon>Batrachia</taxon>
        <taxon>Anura</taxon>
        <taxon>Pipoidea</taxon>
        <taxon>Pipidae</taxon>
        <taxon>Xenopodinae</taxon>
        <taxon>Xenopus</taxon>
        <taxon>Silurana</taxon>
    </lineage>
</organism>